<comment type="similarity">
    <text evidence="1">Belongs to the bacterial ribosomal protein bS21 family.</text>
</comment>
<gene>
    <name evidence="1" type="primary">rpsU</name>
    <name type="ordered locus">lpl2280</name>
</gene>
<accession>Q5WU88</accession>
<feature type="chain" id="PRO_0000266697" description="Small ribosomal subunit protein bS21">
    <location>
        <begin position="1"/>
        <end position="79"/>
    </location>
</feature>
<feature type="region of interest" description="Disordered" evidence="2">
    <location>
        <begin position="47"/>
        <end position="79"/>
    </location>
</feature>
<feature type="compositionally biased region" description="Basic residues" evidence="2">
    <location>
        <begin position="47"/>
        <end position="59"/>
    </location>
</feature>
<feature type="compositionally biased region" description="Basic residues" evidence="2">
    <location>
        <begin position="69"/>
        <end position="79"/>
    </location>
</feature>
<proteinExistence type="inferred from homology"/>
<protein>
    <recommendedName>
        <fullName evidence="1">Small ribosomal subunit protein bS21</fullName>
    </recommendedName>
    <alternativeName>
        <fullName evidence="3">30S ribosomal protein S21</fullName>
    </alternativeName>
</protein>
<organism>
    <name type="scientific">Legionella pneumophila (strain Lens)</name>
    <dbReference type="NCBI Taxonomy" id="297245"/>
    <lineage>
        <taxon>Bacteria</taxon>
        <taxon>Pseudomonadati</taxon>
        <taxon>Pseudomonadota</taxon>
        <taxon>Gammaproteobacteria</taxon>
        <taxon>Legionellales</taxon>
        <taxon>Legionellaceae</taxon>
        <taxon>Legionella</taxon>
    </lineage>
</organism>
<keyword id="KW-0687">Ribonucleoprotein</keyword>
<keyword id="KW-0689">Ribosomal protein</keyword>
<dbReference type="EMBL" id="CR628337">
    <property type="protein sequence ID" value="CAH16520.1"/>
    <property type="molecule type" value="Genomic_DNA"/>
</dbReference>
<dbReference type="RefSeq" id="WP_010948064.1">
    <property type="nucleotide sequence ID" value="NC_006369.1"/>
</dbReference>
<dbReference type="SMR" id="Q5WU88"/>
<dbReference type="DNASU" id="3114393"/>
<dbReference type="GeneID" id="57036351"/>
<dbReference type="KEGG" id="lpf:lpl2280"/>
<dbReference type="LegioList" id="lpl2280"/>
<dbReference type="HOGENOM" id="CLU_159258_1_0_6"/>
<dbReference type="Proteomes" id="UP000002517">
    <property type="component" value="Chromosome"/>
</dbReference>
<dbReference type="GO" id="GO:1990904">
    <property type="term" value="C:ribonucleoprotein complex"/>
    <property type="evidence" value="ECO:0007669"/>
    <property type="project" value="UniProtKB-KW"/>
</dbReference>
<dbReference type="GO" id="GO:0005840">
    <property type="term" value="C:ribosome"/>
    <property type="evidence" value="ECO:0007669"/>
    <property type="project" value="UniProtKB-KW"/>
</dbReference>
<dbReference type="GO" id="GO:0003735">
    <property type="term" value="F:structural constituent of ribosome"/>
    <property type="evidence" value="ECO:0007669"/>
    <property type="project" value="InterPro"/>
</dbReference>
<dbReference type="GO" id="GO:0006412">
    <property type="term" value="P:translation"/>
    <property type="evidence" value="ECO:0007669"/>
    <property type="project" value="UniProtKB-UniRule"/>
</dbReference>
<dbReference type="Gene3D" id="1.20.5.1150">
    <property type="entry name" value="Ribosomal protein S8"/>
    <property type="match status" value="1"/>
</dbReference>
<dbReference type="HAMAP" id="MF_00358">
    <property type="entry name" value="Ribosomal_bS21"/>
    <property type="match status" value="1"/>
</dbReference>
<dbReference type="InterPro" id="IPR001911">
    <property type="entry name" value="Ribosomal_bS21"/>
</dbReference>
<dbReference type="InterPro" id="IPR018278">
    <property type="entry name" value="Ribosomal_bS21_CS"/>
</dbReference>
<dbReference type="InterPro" id="IPR038380">
    <property type="entry name" value="Ribosomal_bS21_sf"/>
</dbReference>
<dbReference type="NCBIfam" id="TIGR00030">
    <property type="entry name" value="S21p"/>
    <property type="match status" value="1"/>
</dbReference>
<dbReference type="PANTHER" id="PTHR21109">
    <property type="entry name" value="MITOCHONDRIAL 28S RIBOSOMAL PROTEIN S21"/>
    <property type="match status" value="1"/>
</dbReference>
<dbReference type="PANTHER" id="PTHR21109:SF22">
    <property type="entry name" value="SMALL RIBOSOMAL SUBUNIT PROTEIN BS21"/>
    <property type="match status" value="1"/>
</dbReference>
<dbReference type="Pfam" id="PF01165">
    <property type="entry name" value="Ribosomal_S21"/>
    <property type="match status" value="1"/>
</dbReference>
<dbReference type="PRINTS" id="PR00976">
    <property type="entry name" value="RIBOSOMALS21"/>
</dbReference>
<dbReference type="PROSITE" id="PS01181">
    <property type="entry name" value="RIBOSOMAL_S21"/>
    <property type="match status" value="1"/>
</dbReference>
<name>RS21_LEGPL</name>
<reference key="1">
    <citation type="journal article" date="2004" name="Nat. Genet.">
        <title>Evidence in the Legionella pneumophila genome for exploitation of host cell functions and high genome plasticity.</title>
        <authorList>
            <person name="Cazalet C."/>
            <person name="Rusniok C."/>
            <person name="Brueggemann H."/>
            <person name="Zidane N."/>
            <person name="Magnier A."/>
            <person name="Ma L."/>
            <person name="Tichit M."/>
            <person name="Jarraud S."/>
            <person name="Bouchier C."/>
            <person name="Vandenesch F."/>
            <person name="Kunst F."/>
            <person name="Etienne J."/>
            <person name="Glaser P."/>
            <person name="Buchrieser C."/>
        </authorList>
    </citation>
    <scope>NUCLEOTIDE SEQUENCE [LARGE SCALE GENOMIC DNA]</scope>
    <source>
        <strain>Lens</strain>
    </source>
</reference>
<evidence type="ECO:0000255" key="1">
    <source>
        <dbReference type="HAMAP-Rule" id="MF_00358"/>
    </source>
</evidence>
<evidence type="ECO:0000256" key="2">
    <source>
        <dbReference type="SAM" id="MobiDB-lite"/>
    </source>
</evidence>
<evidence type="ECO:0000305" key="3"/>
<sequence length="79" mass="9352">MPTVRVKEGENPEYALRRFKRSCEKAGILTELRRREFYEKPTAERKRKQAAAVKRHLKKISRDVSSRRGVGHRRKKSTT</sequence>